<protein>
    <recommendedName>
        <fullName>NADH-ubiquinone oxidoreductase chain 4L</fullName>
        <ecNumber>7.1.1.2</ecNumber>
    </recommendedName>
    <alternativeName>
        <fullName>NADH dehydrogenase subunit 4L</fullName>
    </alternativeName>
</protein>
<proteinExistence type="inferred from homology"/>
<feature type="chain" id="PRO_0000274970" description="NADH-ubiquinone oxidoreductase chain 4L">
    <location>
        <begin position="1"/>
        <end position="98"/>
    </location>
</feature>
<feature type="transmembrane region" description="Helical" evidence="3">
    <location>
        <begin position="1"/>
        <end position="21"/>
    </location>
</feature>
<feature type="transmembrane region" description="Helical" evidence="3">
    <location>
        <begin position="29"/>
        <end position="49"/>
    </location>
</feature>
<feature type="transmembrane region" description="Helical" evidence="3">
    <location>
        <begin position="61"/>
        <end position="81"/>
    </location>
</feature>
<organism>
    <name type="scientific">Aotus trivirgatus</name>
    <name type="common">Three-striped night monkey</name>
    <name type="synonym">Douroucouli</name>
    <dbReference type="NCBI Taxonomy" id="9505"/>
    <lineage>
        <taxon>Eukaryota</taxon>
        <taxon>Metazoa</taxon>
        <taxon>Chordata</taxon>
        <taxon>Craniata</taxon>
        <taxon>Vertebrata</taxon>
        <taxon>Euteleostomi</taxon>
        <taxon>Mammalia</taxon>
        <taxon>Eutheria</taxon>
        <taxon>Euarchontoglires</taxon>
        <taxon>Primates</taxon>
        <taxon>Haplorrhini</taxon>
        <taxon>Platyrrhini</taxon>
        <taxon>Aotidae</taxon>
        <taxon>Aotus</taxon>
    </lineage>
</organism>
<evidence type="ECO:0000250" key="1">
    <source>
        <dbReference type="UniProtKB" id="P03901"/>
    </source>
</evidence>
<evidence type="ECO:0000250" key="2">
    <source>
        <dbReference type="UniProtKB" id="P03902"/>
    </source>
</evidence>
<evidence type="ECO:0000255" key="3"/>
<evidence type="ECO:0000305" key="4"/>
<name>NU4LM_AOTTR</name>
<gene>
    <name type="primary">MT-ND4L</name>
    <name type="synonym">MTND4L</name>
    <name type="synonym">NADH4L</name>
    <name type="synonym">ND4L</name>
</gene>
<geneLocation type="mitochondrion"/>
<reference key="1">
    <citation type="submission" date="2003-03" db="EMBL/GenBank/DDBJ databases">
        <title>Isofunctional remodeling of anthropoid primate mitochondrial proteins.</title>
        <authorList>
            <person name="Collura R.V."/>
            <person name="Stewart C.-B.R."/>
            <person name="Ruvolo M."/>
        </authorList>
    </citation>
    <scope>NUCLEOTIDE SEQUENCE [GENOMIC DNA]</scope>
</reference>
<accession>Q7YEL1</accession>
<sequence length="98" mass="11044">MPFIYINVLLAYFMSLLGLLIYRSHLMSSLLCLEGMMLSLFIMATLMTLNMHLTLMYMMPIVLLVFAACEAAVGLALLVLISNLYGLDYVQNLNLLQC</sequence>
<comment type="function">
    <text evidence="1">Core subunit of the mitochondrial membrane respiratory chain NADH dehydrogenase (Complex I) which catalyzes electron transfer from NADH through the respiratory chain, using ubiquinone as an electron acceptor. Part of the enzyme membrane arm which is embedded in the lipid bilayer and involved in proton translocation.</text>
</comment>
<comment type="catalytic activity">
    <reaction evidence="1">
        <text>a ubiquinone + NADH + 5 H(+)(in) = a ubiquinol + NAD(+) + 4 H(+)(out)</text>
        <dbReference type="Rhea" id="RHEA:29091"/>
        <dbReference type="Rhea" id="RHEA-COMP:9565"/>
        <dbReference type="Rhea" id="RHEA-COMP:9566"/>
        <dbReference type="ChEBI" id="CHEBI:15378"/>
        <dbReference type="ChEBI" id="CHEBI:16389"/>
        <dbReference type="ChEBI" id="CHEBI:17976"/>
        <dbReference type="ChEBI" id="CHEBI:57540"/>
        <dbReference type="ChEBI" id="CHEBI:57945"/>
        <dbReference type="EC" id="7.1.1.2"/>
    </reaction>
    <physiologicalReaction direction="left-to-right" evidence="1">
        <dbReference type="Rhea" id="RHEA:29092"/>
    </physiologicalReaction>
</comment>
<comment type="subunit">
    <text evidence="2">Core subunit of respiratory chain NADH dehydrogenase (Complex I) which is composed of 45 different subunits.</text>
</comment>
<comment type="subcellular location">
    <subcellularLocation>
        <location evidence="2">Mitochondrion inner membrane</location>
        <topology evidence="3">Multi-pass membrane protein</topology>
    </subcellularLocation>
</comment>
<comment type="similarity">
    <text evidence="4">Belongs to the complex I subunit 4L family.</text>
</comment>
<dbReference type="EC" id="7.1.1.2"/>
<dbReference type="EMBL" id="AY250707">
    <property type="protein sequence ID" value="AAP33903.1"/>
    <property type="molecule type" value="Genomic_DNA"/>
</dbReference>
<dbReference type="SMR" id="Q7YEL1"/>
<dbReference type="GO" id="GO:0005743">
    <property type="term" value="C:mitochondrial inner membrane"/>
    <property type="evidence" value="ECO:0000250"/>
    <property type="project" value="UniProtKB"/>
</dbReference>
<dbReference type="GO" id="GO:0045271">
    <property type="term" value="C:respiratory chain complex I"/>
    <property type="evidence" value="ECO:0000250"/>
    <property type="project" value="UniProtKB"/>
</dbReference>
<dbReference type="GO" id="GO:0008137">
    <property type="term" value="F:NADH dehydrogenase (ubiquinone) activity"/>
    <property type="evidence" value="ECO:0000250"/>
    <property type="project" value="UniProtKB"/>
</dbReference>
<dbReference type="GO" id="GO:0042773">
    <property type="term" value="P:ATP synthesis coupled electron transport"/>
    <property type="evidence" value="ECO:0007669"/>
    <property type="project" value="InterPro"/>
</dbReference>
<dbReference type="FunFam" id="1.10.287.3510:FF:000002">
    <property type="entry name" value="NADH-ubiquinone oxidoreductase chain 4L"/>
    <property type="match status" value="1"/>
</dbReference>
<dbReference type="Gene3D" id="1.10.287.3510">
    <property type="match status" value="1"/>
</dbReference>
<dbReference type="InterPro" id="IPR001133">
    <property type="entry name" value="NADH_UbQ_OxRdtase_chain4L/K"/>
</dbReference>
<dbReference type="InterPro" id="IPR039428">
    <property type="entry name" value="NUOK/Mnh_C1-like"/>
</dbReference>
<dbReference type="PANTHER" id="PTHR11434:SF0">
    <property type="entry name" value="NADH-UBIQUINONE OXIDOREDUCTASE CHAIN 4L"/>
    <property type="match status" value="1"/>
</dbReference>
<dbReference type="PANTHER" id="PTHR11434">
    <property type="entry name" value="NADH-UBIQUINONE OXIDOREDUCTASE SUBUNIT ND4L"/>
    <property type="match status" value="1"/>
</dbReference>
<dbReference type="Pfam" id="PF00420">
    <property type="entry name" value="Oxidored_q2"/>
    <property type="match status" value="1"/>
</dbReference>
<keyword id="KW-0249">Electron transport</keyword>
<keyword id="KW-0472">Membrane</keyword>
<keyword id="KW-0496">Mitochondrion</keyword>
<keyword id="KW-0999">Mitochondrion inner membrane</keyword>
<keyword id="KW-0520">NAD</keyword>
<keyword id="KW-0679">Respiratory chain</keyword>
<keyword id="KW-1278">Translocase</keyword>
<keyword id="KW-0812">Transmembrane</keyword>
<keyword id="KW-1133">Transmembrane helix</keyword>
<keyword id="KW-0813">Transport</keyword>
<keyword id="KW-0830">Ubiquinone</keyword>